<accession>A1V4K1</accession>
<dbReference type="EC" id="1.17.7.3" evidence="1"/>
<dbReference type="EMBL" id="CP000526">
    <property type="protein sequence ID" value="ABM50583.1"/>
    <property type="molecule type" value="Genomic_DNA"/>
</dbReference>
<dbReference type="SMR" id="A1V4K1"/>
<dbReference type="KEGG" id="bmv:BMASAVP1_A1835"/>
<dbReference type="HOGENOM" id="CLU_042258_1_0_4"/>
<dbReference type="UniPathway" id="UPA00056">
    <property type="reaction ID" value="UER00096"/>
</dbReference>
<dbReference type="GO" id="GO:0051539">
    <property type="term" value="F:4 iron, 4 sulfur cluster binding"/>
    <property type="evidence" value="ECO:0007669"/>
    <property type="project" value="UniProtKB-UniRule"/>
</dbReference>
<dbReference type="GO" id="GO:0046429">
    <property type="term" value="F:4-hydroxy-3-methylbut-2-en-1-yl diphosphate synthase activity (ferredoxin)"/>
    <property type="evidence" value="ECO:0007669"/>
    <property type="project" value="UniProtKB-UniRule"/>
</dbReference>
<dbReference type="GO" id="GO:0141197">
    <property type="term" value="F:4-hydroxy-3-methylbut-2-enyl-diphosphate synthase activity (flavodoxin)"/>
    <property type="evidence" value="ECO:0007669"/>
    <property type="project" value="UniProtKB-EC"/>
</dbReference>
<dbReference type="GO" id="GO:0005506">
    <property type="term" value="F:iron ion binding"/>
    <property type="evidence" value="ECO:0007669"/>
    <property type="project" value="InterPro"/>
</dbReference>
<dbReference type="GO" id="GO:0019288">
    <property type="term" value="P:isopentenyl diphosphate biosynthetic process, methylerythritol 4-phosphate pathway"/>
    <property type="evidence" value="ECO:0007669"/>
    <property type="project" value="UniProtKB-UniRule"/>
</dbReference>
<dbReference type="GO" id="GO:0016114">
    <property type="term" value="P:terpenoid biosynthetic process"/>
    <property type="evidence" value="ECO:0007669"/>
    <property type="project" value="InterPro"/>
</dbReference>
<dbReference type="FunFam" id="3.30.413.10:FF:000012">
    <property type="entry name" value="4-hydroxy-3-methylbut-2-en-1-yl diphosphate synthase (flavodoxin)"/>
    <property type="match status" value="1"/>
</dbReference>
<dbReference type="Gene3D" id="3.20.20.20">
    <property type="entry name" value="Dihydropteroate synthase-like"/>
    <property type="match status" value="1"/>
</dbReference>
<dbReference type="Gene3D" id="3.30.413.10">
    <property type="entry name" value="Sulfite Reductase Hemoprotein, domain 1"/>
    <property type="match status" value="1"/>
</dbReference>
<dbReference type="HAMAP" id="MF_00159">
    <property type="entry name" value="IspG"/>
    <property type="match status" value="1"/>
</dbReference>
<dbReference type="InterPro" id="IPR011005">
    <property type="entry name" value="Dihydropteroate_synth-like_sf"/>
</dbReference>
<dbReference type="InterPro" id="IPR016425">
    <property type="entry name" value="IspG_bac"/>
</dbReference>
<dbReference type="InterPro" id="IPR004588">
    <property type="entry name" value="IspG_bac-typ"/>
</dbReference>
<dbReference type="InterPro" id="IPR045854">
    <property type="entry name" value="NO2/SO3_Rdtase_4Fe4S_sf"/>
</dbReference>
<dbReference type="NCBIfam" id="TIGR00612">
    <property type="entry name" value="ispG_gcpE"/>
    <property type="match status" value="1"/>
</dbReference>
<dbReference type="NCBIfam" id="NF001540">
    <property type="entry name" value="PRK00366.1"/>
    <property type="match status" value="1"/>
</dbReference>
<dbReference type="PANTHER" id="PTHR30454">
    <property type="entry name" value="4-HYDROXY-3-METHYLBUT-2-EN-1-YL DIPHOSPHATE SYNTHASE"/>
    <property type="match status" value="1"/>
</dbReference>
<dbReference type="PANTHER" id="PTHR30454:SF0">
    <property type="entry name" value="4-HYDROXY-3-METHYLBUT-2-EN-1-YL DIPHOSPHATE SYNTHASE (FERREDOXIN), CHLOROPLASTIC"/>
    <property type="match status" value="1"/>
</dbReference>
<dbReference type="Pfam" id="PF04551">
    <property type="entry name" value="GcpE"/>
    <property type="match status" value="1"/>
</dbReference>
<dbReference type="PIRSF" id="PIRSF004640">
    <property type="entry name" value="IspG"/>
    <property type="match status" value="1"/>
</dbReference>
<dbReference type="SUPFAM" id="SSF56014">
    <property type="entry name" value="Nitrite and sulphite reductase 4Fe-4S domain-like"/>
    <property type="match status" value="1"/>
</dbReference>
<comment type="function">
    <text evidence="1">Converts 2C-methyl-D-erythritol 2,4-cyclodiphosphate (ME-2,4cPP) into 1-hydroxy-2-methyl-2-(E)-butenyl 4-diphosphate.</text>
</comment>
<comment type="catalytic activity">
    <reaction evidence="1">
        <text>(2E)-4-hydroxy-3-methylbut-2-enyl diphosphate + oxidized [flavodoxin] + H2O + 2 H(+) = 2-C-methyl-D-erythritol 2,4-cyclic diphosphate + reduced [flavodoxin]</text>
        <dbReference type="Rhea" id="RHEA:43604"/>
        <dbReference type="Rhea" id="RHEA-COMP:10622"/>
        <dbReference type="Rhea" id="RHEA-COMP:10623"/>
        <dbReference type="ChEBI" id="CHEBI:15377"/>
        <dbReference type="ChEBI" id="CHEBI:15378"/>
        <dbReference type="ChEBI" id="CHEBI:57618"/>
        <dbReference type="ChEBI" id="CHEBI:58210"/>
        <dbReference type="ChEBI" id="CHEBI:58483"/>
        <dbReference type="ChEBI" id="CHEBI:128753"/>
        <dbReference type="EC" id="1.17.7.3"/>
    </reaction>
</comment>
<comment type="cofactor">
    <cofactor evidence="1">
        <name>[4Fe-4S] cluster</name>
        <dbReference type="ChEBI" id="CHEBI:49883"/>
    </cofactor>
    <text evidence="1">Binds 1 [4Fe-4S] cluster.</text>
</comment>
<comment type="pathway">
    <text evidence="1">Isoprenoid biosynthesis; isopentenyl diphosphate biosynthesis via DXP pathway; isopentenyl diphosphate from 1-deoxy-D-xylulose 5-phosphate: step 5/6.</text>
</comment>
<comment type="similarity">
    <text evidence="1">Belongs to the IspG family.</text>
</comment>
<feature type="chain" id="PRO_1000011448" description="4-hydroxy-3-methylbut-2-en-1-yl diphosphate synthase (flavodoxin)">
    <location>
        <begin position="1"/>
        <end position="416"/>
    </location>
</feature>
<feature type="binding site" evidence="1">
    <location>
        <position position="304"/>
    </location>
    <ligand>
        <name>[4Fe-4S] cluster</name>
        <dbReference type="ChEBI" id="CHEBI:49883"/>
    </ligand>
</feature>
<feature type="binding site" evidence="1">
    <location>
        <position position="307"/>
    </location>
    <ligand>
        <name>[4Fe-4S] cluster</name>
        <dbReference type="ChEBI" id="CHEBI:49883"/>
    </ligand>
</feature>
<feature type="binding site" evidence="1">
    <location>
        <position position="350"/>
    </location>
    <ligand>
        <name>[4Fe-4S] cluster</name>
        <dbReference type="ChEBI" id="CHEBI:49883"/>
    </ligand>
</feature>
<feature type="binding site" evidence="1">
    <location>
        <position position="357"/>
    </location>
    <ligand>
        <name>[4Fe-4S] cluster</name>
        <dbReference type="ChEBI" id="CHEBI:49883"/>
    </ligand>
</feature>
<evidence type="ECO:0000255" key="1">
    <source>
        <dbReference type="HAMAP-Rule" id="MF_00159"/>
    </source>
</evidence>
<organism>
    <name type="scientific">Burkholderia mallei (strain SAVP1)</name>
    <dbReference type="NCBI Taxonomy" id="320388"/>
    <lineage>
        <taxon>Bacteria</taxon>
        <taxon>Pseudomonadati</taxon>
        <taxon>Pseudomonadota</taxon>
        <taxon>Betaproteobacteria</taxon>
        <taxon>Burkholderiales</taxon>
        <taxon>Burkholderiaceae</taxon>
        <taxon>Burkholderia</taxon>
        <taxon>pseudomallei group</taxon>
    </lineage>
</organism>
<gene>
    <name evidence="1" type="primary">ispG</name>
    <name type="ordered locus">BMASAVP1_A1835</name>
</gene>
<sequence>MFGGHAPRRVSHAVDVRWGGTLVTIGGAAPVRVQSMTNTDTADAIGTAIQVKELANAGSELVRITVNTPEAAAAVPAIREQLDRMGVTVPLVGDFHYNGHLLLRDYPDCAQALSKYRINPGNVGQGAKRDSQFAQMIEAAIKYDKPVRIGVNWGSLDQDLLARMMDENGARAEPWEAQSVMYEALIQSAIGSAERAVELGLGRDKIVLSCKVSGVQDLVAVYRELSRRCGFALHLGLTEAGMGSKGIVASTAAIGLLLQEGIGDTIRISLTPEPGAPRTGEVVVGQEILQTMGLRSFAPMVVACPGCGRTTSTLFQELALRIQTYLREQMPVWRSEYPGVEKMNVAVMGCIVNGPGESKHANIGISLPGSGENPAAPVFVDGEKVKTLRGEHIAEEFQQIVSDYVARTYGRAAAQN</sequence>
<keyword id="KW-0004">4Fe-4S</keyword>
<keyword id="KW-0408">Iron</keyword>
<keyword id="KW-0411">Iron-sulfur</keyword>
<keyword id="KW-0414">Isoprene biosynthesis</keyword>
<keyword id="KW-0479">Metal-binding</keyword>
<keyword id="KW-0560">Oxidoreductase</keyword>
<proteinExistence type="inferred from homology"/>
<protein>
    <recommendedName>
        <fullName evidence="1">4-hydroxy-3-methylbut-2-en-1-yl diphosphate synthase (flavodoxin)</fullName>
        <ecNumber evidence="1">1.17.7.3</ecNumber>
    </recommendedName>
    <alternativeName>
        <fullName evidence="1">1-hydroxy-2-methyl-2-(E)-butenyl 4-diphosphate synthase</fullName>
    </alternativeName>
</protein>
<name>ISPG_BURMS</name>
<reference key="1">
    <citation type="journal article" date="2010" name="Genome Biol. Evol.">
        <title>Continuing evolution of Burkholderia mallei through genome reduction and large-scale rearrangements.</title>
        <authorList>
            <person name="Losada L."/>
            <person name="Ronning C.M."/>
            <person name="DeShazer D."/>
            <person name="Woods D."/>
            <person name="Fedorova N."/>
            <person name="Kim H.S."/>
            <person name="Shabalina S.A."/>
            <person name="Pearson T.R."/>
            <person name="Brinkac L."/>
            <person name="Tan P."/>
            <person name="Nandi T."/>
            <person name="Crabtree J."/>
            <person name="Badger J."/>
            <person name="Beckstrom-Sternberg S."/>
            <person name="Saqib M."/>
            <person name="Schutzer S.E."/>
            <person name="Keim P."/>
            <person name="Nierman W.C."/>
        </authorList>
    </citation>
    <scope>NUCLEOTIDE SEQUENCE [LARGE SCALE GENOMIC DNA]</scope>
    <source>
        <strain>SAVP1</strain>
    </source>
</reference>